<protein>
    <recommendedName>
        <fullName>Protein dduB</fullName>
    </recommendedName>
    <alternativeName>
        <fullName>Down-regulated in dupA mutant protein B</fullName>
    </alternativeName>
</protein>
<organism>
    <name type="scientific">Dictyostelium discoideum</name>
    <name type="common">Social amoeba</name>
    <dbReference type="NCBI Taxonomy" id="44689"/>
    <lineage>
        <taxon>Eukaryota</taxon>
        <taxon>Amoebozoa</taxon>
        <taxon>Evosea</taxon>
        <taxon>Eumycetozoa</taxon>
        <taxon>Dictyostelia</taxon>
        <taxon>Dictyosteliales</taxon>
        <taxon>Dictyosteliaceae</taxon>
        <taxon>Dictyostelium</taxon>
    </lineage>
</organism>
<keyword id="KW-0325">Glycoprotein</keyword>
<keyword id="KW-0472">Membrane</keyword>
<keyword id="KW-1185">Reference proteome</keyword>
<keyword id="KW-0732">Signal</keyword>
<keyword id="KW-0812">Transmembrane</keyword>
<keyword id="KW-1133">Transmembrane helix</keyword>
<gene>
    <name type="primary">dduB</name>
    <name type="ORF">DDB_G0271234</name>
</gene>
<evidence type="ECO:0000255" key="1"/>
<evidence type="ECO:0000305" key="2"/>
<name>DDUB_DICDI</name>
<comment type="subcellular location">
    <subcellularLocation>
        <location evidence="2">Membrane</location>
        <topology evidence="2">Single-pass type I membrane protein</topology>
    </subcellularLocation>
</comment>
<feature type="signal peptide" evidence="1">
    <location>
        <begin position="1"/>
        <end position="22"/>
    </location>
</feature>
<feature type="chain" id="PRO_0000393331" description="Protein dduB">
    <location>
        <begin position="23"/>
        <end position="1201"/>
    </location>
</feature>
<feature type="topological domain" description="Extracellular" evidence="1">
    <location>
        <begin position="23"/>
        <end position="1180"/>
    </location>
</feature>
<feature type="transmembrane region" description="Helical" evidence="1">
    <location>
        <begin position="1181"/>
        <end position="1201"/>
    </location>
</feature>
<feature type="glycosylation site" description="N-linked (GlcNAc...) asparagine" evidence="1">
    <location>
        <position position="68"/>
    </location>
</feature>
<feature type="glycosylation site" description="N-linked (GlcNAc...) asparagine" evidence="1">
    <location>
        <position position="122"/>
    </location>
</feature>
<feature type="glycosylation site" description="N-linked (GlcNAc...) asparagine" evidence="1">
    <location>
        <position position="150"/>
    </location>
</feature>
<feature type="glycosylation site" description="N-linked (GlcNAc...) asparagine" evidence="1">
    <location>
        <position position="185"/>
    </location>
</feature>
<feature type="glycosylation site" description="N-linked (GlcNAc...) asparagine" evidence="1">
    <location>
        <position position="283"/>
    </location>
</feature>
<feature type="glycosylation site" description="N-linked (GlcNAc...) asparagine" evidence="1">
    <location>
        <position position="348"/>
    </location>
</feature>
<feature type="glycosylation site" description="N-linked (GlcNAc...) asparagine" evidence="1">
    <location>
        <position position="360"/>
    </location>
</feature>
<feature type="glycosylation site" description="N-linked (GlcNAc...) asparagine" evidence="1">
    <location>
        <position position="437"/>
    </location>
</feature>
<feature type="glycosylation site" description="N-linked (GlcNAc...) asparagine" evidence="1">
    <location>
        <position position="448"/>
    </location>
</feature>
<feature type="glycosylation site" description="N-linked (GlcNAc...) asparagine" evidence="1">
    <location>
        <position position="518"/>
    </location>
</feature>
<feature type="glycosylation site" description="N-linked (GlcNAc...) asparagine" evidence="1">
    <location>
        <position position="535"/>
    </location>
</feature>
<feature type="glycosylation site" description="N-linked (GlcNAc...) asparagine" evidence="1">
    <location>
        <position position="554"/>
    </location>
</feature>
<feature type="glycosylation site" description="N-linked (GlcNAc...) asparagine" evidence="1">
    <location>
        <position position="585"/>
    </location>
</feature>
<feature type="glycosylation site" description="N-linked (GlcNAc...) asparagine" evidence="1">
    <location>
        <position position="631"/>
    </location>
</feature>
<feature type="glycosylation site" description="N-linked (GlcNAc...) asparagine" evidence="1">
    <location>
        <position position="759"/>
    </location>
</feature>
<feature type="glycosylation site" description="N-linked (GlcNAc...) asparagine" evidence="1">
    <location>
        <position position="815"/>
    </location>
</feature>
<feature type="glycosylation site" description="N-linked (GlcNAc...) asparagine" evidence="1">
    <location>
        <position position="830"/>
    </location>
</feature>
<feature type="glycosylation site" description="N-linked (GlcNAc...) asparagine" evidence="1">
    <location>
        <position position="844"/>
    </location>
</feature>
<feature type="glycosylation site" description="N-linked (GlcNAc...) asparagine" evidence="1">
    <location>
        <position position="946"/>
    </location>
</feature>
<feature type="glycosylation site" description="N-linked (GlcNAc...) asparagine" evidence="1">
    <location>
        <position position="1042"/>
    </location>
</feature>
<feature type="glycosylation site" description="N-linked (GlcNAc...) asparagine" evidence="1">
    <location>
        <position position="1058"/>
    </location>
</feature>
<feature type="glycosylation site" description="N-linked (GlcNAc...) asparagine" evidence="1">
    <location>
        <position position="1098"/>
    </location>
</feature>
<feature type="glycosylation site" description="N-linked (GlcNAc...) asparagine" evidence="1">
    <location>
        <position position="1108"/>
    </location>
</feature>
<dbReference type="EMBL" id="AAFI02000006">
    <property type="protein sequence ID" value="EAL71747.1"/>
    <property type="molecule type" value="Genomic_DNA"/>
</dbReference>
<dbReference type="RefSeq" id="XP_645715.1">
    <property type="nucleotide sequence ID" value="XM_640623.1"/>
</dbReference>
<dbReference type="FunCoup" id="Q55B97">
    <property type="interactions" value="141"/>
</dbReference>
<dbReference type="GlyCosmos" id="Q55B97">
    <property type="glycosylation" value="23 sites, No reported glycans"/>
</dbReference>
<dbReference type="GlyGen" id="Q55B97">
    <property type="glycosylation" value="24 sites"/>
</dbReference>
<dbReference type="PaxDb" id="44689-DDB0202794"/>
<dbReference type="EnsemblProtists" id="EAL71747">
    <property type="protein sequence ID" value="EAL71747"/>
    <property type="gene ID" value="DDB_G0271234"/>
</dbReference>
<dbReference type="GeneID" id="8617908"/>
<dbReference type="KEGG" id="ddi:DDB_G0271234"/>
<dbReference type="dictyBase" id="DDB_G0271234">
    <property type="gene designation" value="dduB"/>
</dbReference>
<dbReference type="VEuPathDB" id="AmoebaDB:DDB_G0271234"/>
<dbReference type="HOGENOM" id="CLU_271632_0_0_1"/>
<dbReference type="InParanoid" id="Q55B97"/>
<dbReference type="PhylomeDB" id="Q55B97"/>
<dbReference type="PRO" id="PR:Q55B97"/>
<dbReference type="Proteomes" id="UP000002195">
    <property type="component" value="Chromosome 2"/>
</dbReference>
<dbReference type="GO" id="GO:0016020">
    <property type="term" value="C:membrane"/>
    <property type="evidence" value="ECO:0007669"/>
    <property type="project" value="UniProtKB-SubCell"/>
</dbReference>
<reference key="1">
    <citation type="journal article" date="2002" name="Nature">
        <title>Sequence and analysis of chromosome 2 of Dictyostelium discoideum.</title>
        <authorList>
            <person name="Gloeckner G."/>
            <person name="Eichinger L."/>
            <person name="Szafranski K."/>
            <person name="Pachebat J.A."/>
            <person name="Bankier A.T."/>
            <person name="Dear P.H."/>
            <person name="Lehmann R."/>
            <person name="Baumgart C."/>
            <person name="Parra G."/>
            <person name="Abril J.F."/>
            <person name="Guigo R."/>
            <person name="Kumpf K."/>
            <person name="Tunggal B."/>
            <person name="Cox E.C."/>
            <person name="Quail M.A."/>
            <person name="Platzer M."/>
            <person name="Rosenthal A."/>
            <person name="Noegel A.A."/>
        </authorList>
    </citation>
    <scope>NUCLEOTIDE SEQUENCE [LARGE SCALE GENOMIC DNA]</scope>
    <source>
        <strain>AX4</strain>
    </source>
</reference>
<reference key="2">
    <citation type="journal article" date="2005" name="Nature">
        <title>The genome of the social amoeba Dictyostelium discoideum.</title>
        <authorList>
            <person name="Eichinger L."/>
            <person name="Pachebat J.A."/>
            <person name="Gloeckner G."/>
            <person name="Rajandream M.A."/>
            <person name="Sucgang R."/>
            <person name="Berriman M."/>
            <person name="Song J."/>
            <person name="Olsen R."/>
            <person name="Szafranski K."/>
            <person name="Xu Q."/>
            <person name="Tunggal B."/>
            <person name="Kummerfeld S."/>
            <person name="Madera M."/>
            <person name="Konfortov B.A."/>
            <person name="Rivero F."/>
            <person name="Bankier A.T."/>
            <person name="Lehmann R."/>
            <person name="Hamlin N."/>
            <person name="Davies R."/>
            <person name="Gaudet P."/>
            <person name="Fey P."/>
            <person name="Pilcher K."/>
            <person name="Chen G."/>
            <person name="Saunders D."/>
            <person name="Sodergren E.J."/>
            <person name="Davis P."/>
            <person name="Kerhornou A."/>
            <person name="Nie X."/>
            <person name="Hall N."/>
            <person name="Anjard C."/>
            <person name="Hemphill L."/>
            <person name="Bason N."/>
            <person name="Farbrother P."/>
            <person name="Desany B."/>
            <person name="Just E."/>
            <person name="Morio T."/>
            <person name="Rost R."/>
            <person name="Churcher C.M."/>
            <person name="Cooper J."/>
            <person name="Haydock S."/>
            <person name="van Driessche N."/>
            <person name="Cronin A."/>
            <person name="Goodhead I."/>
            <person name="Muzny D.M."/>
            <person name="Mourier T."/>
            <person name="Pain A."/>
            <person name="Lu M."/>
            <person name="Harper D."/>
            <person name="Lindsay R."/>
            <person name="Hauser H."/>
            <person name="James K.D."/>
            <person name="Quiles M."/>
            <person name="Madan Babu M."/>
            <person name="Saito T."/>
            <person name="Buchrieser C."/>
            <person name="Wardroper A."/>
            <person name="Felder M."/>
            <person name="Thangavelu M."/>
            <person name="Johnson D."/>
            <person name="Knights A."/>
            <person name="Loulseged H."/>
            <person name="Mungall K.L."/>
            <person name="Oliver K."/>
            <person name="Price C."/>
            <person name="Quail M.A."/>
            <person name="Urushihara H."/>
            <person name="Hernandez J."/>
            <person name="Rabbinowitsch E."/>
            <person name="Steffen D."/>
            <person name="Sanders M."/>
            <person name="Ma J."/>
            <person name="Kohara Y."/>
            <person name="Sharp S."/>
            <person name="Simmonds M.N."/>
            <person name="Spiegler S."/>
            <person name="Tivey A."/>
            <person name="Sugano S."/>
            <person name="White B."/>
            <person name="Walker D."/>
            <person name="Woodward J.R."/>
            <person name="Winckler T."/>
            <person name="Tanaka Y."/>
            <person name="Shaulsky G."/>
            <person name="Schleicher M."/>
            <person name="Weinstock G.M."/>
            <person name="Rosenthal A."/>
            <person name="Cox E.C."/>
            <person name="Chisholm R.L."/>
            <person name="Gibbs R.A."/>
            <person name="Loomis W.F."/>
            <person name="Platzer M."/>
            <person name="Kay R.R."/>
            <person name="Williams J.G."/>
            <person name="Dear P.H."/>
            <person name="Noegel A.A."/>
            <person name="Barrell B.G."/>
            <person name="Kuspa A."/>
        </authorList>
    </citation>
    <scope>NUCLEOTIDE SEQUENCE [LARGE SCALE GENOMIC DNA]</scope>
    <source>
        <strain>AX4</strain>
    </source>
</reference>
<accession>Q55B97</accession>
<proteinExistence type="inferred from homology"/>
<sequence length="1201" mass="135511">MKFIKYLLILFLILKINYFVESGVDCQKNTEYFVENSCGKNPSKLNINTDIYYFESIGITPYSPPVYNESTTNYFWYLKDGIEYTFSYRYKGCQNIKSHSIVSQGMYYQLLSQPLCPNTYFNYTIYNSGEFGGNTNYYSTPQNIISSNYNGSCTINILITPLSNSKGAFQSSAAKYTYPTCGFNNGTISVDLTKGYSNCHLFSQFDTSFLYEIEPSSPCFYSGLESNYYYLFVDSKECATERLSIQLFNVFTPLEITFENVPDYNQNSIVSLSLSSGDNGILNKTNSFATVGGTGPDPLSTWSHKETKITSTTQFGYFYNKDFSTDPLKVICSFNDGFEPQKFNPNFNFTVTKSDTCLENVTITFYPLPSQTFVVHDYILGNILPLTNNVLSVQYNKFLHISEISSNSERYYSTAFYAPIYRVVETSNGIGCWKTYNITIGEYQIYSNLTMKVYDGDEYEYIFYPIEGVFVNVPANYFYIHYKVKDCEVESIIMIDKYEEITPMDDVKMDISIYELGNCTHETSILVNIDTVFGNFSKVYSSFSNGYFSFYLPNCSCNIGFYYSIPPLIDSETFSYGFISDLDCNSTGTVIQLLGSNGNTIQEVYSNGIKLIVNNDVDTDFAYNIGPGENNVTIKYSNTKGTCYKSQMINIQSPYEVPLVEVTPVIDCDSSDGKISISNYMNFYSLDIIIDSSTIPINSGLVSNLPTGTYTIVYGNSGSCANSIDVYVPSSEQYVEITTSVISHPTCGEQSLNGDGKVNVTLKVLGIKKNTFYIQNQNQISSLTFSDGGVYIAAAPGLNTLSISYGGCIWNRDVNTTISKPTFSFEKIYNDTCLSSVYYKLINNNTNIAINSITSPYTLYSYQNEYYTQMATNLIYPYTVTWNTYCTETFYQEFTFDTPFNYYSNYIQYEIVKADNCNSFKIDIIIKNMNTFQKVTLSSKYPTPINSTHAIFKNLPPSISYDISFTLFDGCSGTEMVGYQQLSNGNTKETIDIIKVNDICNSGKGSIQLSNMDTSNHYYYVKTFSDYYVYTSYPIQPTTNDNGTIISLLSNLPVGSYNITRNCKSITNCYIETKVVIENKDPIIESISVTDSYDKLNNGTAEIKLNYNSTYPINFKIIGTQLSNQNGIFSNLPPKTYEVQVTLTDRMCPITISQSFTINFKTSPTPPPLPQDPSDELSTSSFIQLNILSLLLISIFTIFIL</sequence>